<gene>
    <name evidence="1" type="primary">glmM</name>
    <name type="ordered locus">YPTB0476</name>
</gene>
<proteinExistence type="inferred from homology"/>
<feature type="chain" id="PRO_0000148011" description="Phosphoglucosamine mutase">
    <location>
        <begin position="1"/>
        <end position="446"/>
    </location>
</feature>
<feature type="active site" description="Phosphoserine intermediate" evidence="1">
    <location>
        <position position="102"/>
    </location>
</feature>
<feature type="binding site" description="via phosphate group" evidence="1">
    <location>
        <position position="102"/>
    </location>
    <ligand>
        <name>Mg(2+)</name>
        <dbReference type="ChEBI" id="CHEBI:18420"/>
    </ligand>
</feature>
<feature type="binding site" evidence="1">
    <location>
        <position position="241"/>
    </location>
    <ligand>
        <name>Mg(2+)</name>
        <dbReference type="ChEBI" id="CHEBI:18420"/>
    </ligand>
</feature>
<feature type="binding site" evidence="1">
    <location>
        <position position="243"/>
    </location>
    <ligand>
        <name>Mg(2+)</name>
        <dbReference type="ChEBI" id="CHEBI:18420"/>
    </ligand>
</feature>
<feature type="binding site" evidence="1">
    <location>
        <position position="245"/>
    </location>
    <ligand>
        <name>Mg(2+)</name>
        <dbReference type="ChEBI" id="CHEBI:18420"/>
    </ligand>
</feature>
<feature type="modified residue" description="Phosphoserine" evidence="1">
    <location>
        <position position="102"/>
    </location>
</feature>
<accession>Q66F64</accession>
<keyword id="KW-0413">Isomerase</keyword>
<keyword id="KW-0460">Magnesium</keyword>
<keyword id="KW-0479">Metal-binding</keyword>
<keyword id="KW-0597">Phosphoprotein</keyword>
<protein>
    <recommendedName>
        <fullName evidence="1">Phosphoglucosamine mutase</fullName>
        <ecNumber evidence="1">5.4.2.10</ecNumber>
    </recommendedName>
</protein>
<evidence type="ECO:0000255" key="1">
    <source>
        <dbReference type="HAMAP-Rule" id="MF_01554"/>
    </source>
</evidence>
<comment type="function">
    <text evidence="1">Catalyzes the conversion of glucosamine-6-phosphate to glucosamine-1-phosphate.</text>
</comment>
<comment type="catalytic activity">
    <reaction evidence="1">
        <text>alpha-D-glucosamine 1-phosphate = D-glucosamine 6-phosphate</text>
        <dbReference type="Rhea" id="RHEA:23424"/>
        <dbReference type="ChEBI" id="CHEBI:58516"/>
        <dbReference type="ChEBI" id="CHEBI:58725"/>
        <dbReference type="EC" id="5.4.2.10"/>
    </reaction>
</comment>
<comment type="cofactor">
    <cofactor evidence="1">
        <name>Mg(2+)</name>
        <dbReference type="ChEBI" id="CHEBI:18420"/>
    </cofactor>
    <text evidence="1">Binds 1 Mg(2+) ion per subunit.</text>
</comment>
<comment type="PTM">
    <text evidence="1">Activated by phosphorylation.</text>
</comment>
<comment type="similarity">
    <text evidence="1">Belongs to the phosphohexose mutase family.</text>
</comment>
<sequence>MSNRKYFGTDGIRGKVGESPITPDFVLKLGWAAGKVLARHGSRKIIIGKDTRISGYMLESALEAGLAAAGLSALFTGPMPTPAVAYLTRTFRAEAGIVISASHNPFYDNGIKFFSIDGTKLPDDVEEAIEAEMEKPLTCVESAELGKANRIVDAAGRYIEFCKGTFPSELSLNELKIVVDCANGATYHIAPSVLRELGATVITIGCEPDGMNINEECGATDVRLLQERVLAEGAHVGLAFDGDGDRLMMVDHLGNKVDGDQILYIIAREGLRQGQLKGGAVGTLMSNMGLQLALKDLGIPFVRAKVGDRYVLEAMQEKGWRIGAENSGHVILLDKTTTGDGIVAGLQVLTAMVRNHMSLHDLCSGMKLLPQILVNVRFSGEHNPLKSDEVEEVTRQVEKELGGRGRVLLRKSGTEPLIRVMVEGDAEESLIAEMANRIADAVKAAG</sequence>
<dbReference type="EC" id="5.4.2.10" evidence="1"/>
<dbReference type="EMBL" id="BX936398">
    <property type="protein sequence ID" value="CAH19716.1"/>
    <property type="molecule type" value="Genomic_DNA"/>
</dbReference>
<dbReference type="RefSeq" id="WP_002210189.1">
    <property type="nucleotide sequence ID" value="NZ_CP009712.1"/>
</dbReference>
<dbReference type="SMR" id="Q66F64"/>
<dbReference type="GeneID" id="57975214"/>
<dbReference type="KEGG" id="ypo:BZ17_2089"/>
<dbReference type="KEGG" id="yps:YPTB0476"/>
<dbReference type="PATRIC" id="fig|273123.14.peg.2215"/>
<dbReference type="Proteomes" id="UP000001011">
    <property type="component" value="Chromosome"/>
</dbReference>
<dbReference type="GO" id="GO:0005829">
    <property type="term" value="C:cytosol"/>
    <property type="evidence" value="ECO:0007669"/>
    <property type="project" value="TreeGrafter"/>
</dbReference>
<dbReference type="GO" id="GO:0000287">
    <property type="term" value="F:magnesium ion binding"/>
    <property type="evidence" value="ECO:0007669"/>
    <property type="project" value="UniProtKB-UniRule"/>
</dbReference>
<dbReference type="GO" id="GO:0008966">
    <property type="term" value="F:phosphoglucosamine mutase activity"/>
    <property type="evidence" value="ECO:0007669"/>
    <property type="project" value="UniProtKB-UniRule"/>
</dbReference>
<dbReference type="GO" id="GO:0004615">
    <property type="term" value="F:phosphomannomutase activity"/>
    <property type="evidence" value="ECO:0007669"/>
    <property type="project" value="TreeGrafter"/>
</dbReference>
<dbReference type="GO" id="GO:0005975">
    <property type="term" value="P:carbohydrate metabolic process"/>
    <property type="evidence" value="ECO:0007669"/>
    <property type="project" value="InterPro"/>
</dbReference>
<dbReference type="GO" id="GO:0009252">
    <property type="term" value="P:peptidoglycan biosynthetic process"/>
    <property type="evidence" value="ECO:0007669"/>
    <property type="project" value="TreeGrafter"/>
</dbReference>
<dbReference type="GO" id="GO:0006048">
    <property type="term" value="P:UDP-N-acetylglucosamine biosynthetic process"/>
    <property type="evidence" value="ECO:0007669"/>
    <property type="project" value="TreeGrafter"/>
</dbReference>
<dbReference type="CDD" id="cd05802">
    <property type="entry name" value="GlmM"/>
    <property type="match status" value="1"/>
</dbReference>
<dbReference type="FunFam" id="3.30.310.50:FF:000001">
    <property type="entry name" value="Phosphoglucosamine mutase"/>
    <property type="match status" value="1"/>
</dbReference>
<dbReference type="FunFam" id="3.40.120.10:FF:000001">
    <property type="entry name" value="Phosphoglucosamine mutase"/>
    <property type="match status" value="1"/>
</dbReference>
<dbReference type="FunFam" id="3.40.120.10:FF:000002">
    <property type="entry name" value="Phosphoglucosamine mutase"/>
    <property type="match status" value="1"/>
</dbReference>
<dbReference type="Gene3D" id="3.40.120.10">
    <property type="entry name" value="Alpha-D-Glucose-1,6-Bisphosphate, subunit A, domain 3"/>
    <property type="match status" value="3"/>
</dbReference>
<dbReference type="Gene3D" id="3.30.310.50">
    <property type="entry name" value="Alpha-D-phosphohexomutase, C-terminal domain"/>
    <property type="match status" value="1"/>
</dbReference>
<dbReference type="HAMAP" id="MF_01554_B">
    <property type="entry name" value="GlmM_B"/>
    <property type="match status" value="1"/>
</dbReference>
<dbReference type="InterPro" id="IPR005844">
    <property type="entry name" value="A-D-PHexomutase_a/b/a-I"/>
</dbReference>
<dbReference type="InterPro" id="IPR016055">
    <property type="entry name" value="A-D-PHexomutase_a/b/a-I/II/III"/>
</dbReference>
<dbReference type="InterPro" id="IPR005845">
    <property type="entry name" value="A-D-PHexomutase_a/b/a-II"/>
</dbReference>
<dbReference type="InterPro" id="IPR005846">
    <property type="entry name" value="A-D-PHexomutase_a/b/a-III"/>
</dbReference>
<dbReference type="InterPro" id="IPR005843">
    <property type="entry name" value="A-D-PHexomutase_C"/>
</dbReference>
<dbReference type="InterPro" id="IPR036900">
    <property type="entry name" value="A-D-PHexomutase_C_sf"/>
</dbReference>
<dbReference type="InterPro" id="IPR016066">
    <property type="entry name" value="A-D-PHexomutase_CS"/>
</dbReference>
<dbReference type="InterPro" id="IPR005841">
    <property type="entry name" value="Alpha-D-phosphohexomutase_SF"/>
</dbReference>
<dbReference type="InterPro" id="IPR006352">
    <property type="entry name" value="GlmM_bact"/>
</dbReference>
<dbReference type="InterPro" id="IPR050060">
    <property type="entry name" value="Phosphoglucosamine_mutase"/>
</dbReference>
<dbReference type="NCBIfam" id="TIGR01455">
    <property type="entry name" value="glmM"/>
    <property type="match status" value="1"/>
</dbReference>
<dbReference type="NCBIfam" id="NF008139">
    <property type="entry name" value="PRK10887.1"/>
    <property type="match status" value="1"/>
</dbReference>
<dbReference type="PANTHER" id="PTHR42946:SF1">
    <property type="entry name" value="PHOSPHOGLUCOMUTASE (ALPHA-D-GLUCOSE-1,6-BISPHOSPHATE-DEPENDENT)"/>
    <property type="match status" value="1"/>
</dbReference>
<dbReference type="PANTHER" id="PTHR42946">
    <property type="entry name" value="PHOSPHOHEXOSE MUTASE"/>
    <property type="match status" value="1"/>
</dbReference>
<dbReference type="Pfam" id="PF02878">
    <property type="entry name" value="PGM_PMM_I"/>
    <property type="match status" value="1"/>
</dbReference>
<dbReference type="Pfam" id="PF02879">
    <property type="entry name" value="PGM_PMM_II"/>
    <property type="match status" value="1"/>
</dbReference>
<dbReference type="Pfam" id="PF02880">
    <property type="entry name" value="PGM_PMM_III"/>
    <property type="match status" value="1"/>
</dbReference>
<dbReference type="Pfam" id="PF00408">
    <property type="entry name" value="PGM_PMM_IV"/>
    <property type="match status" value="1"/>
</dbReference>
<dbReference type="PRINTS" id="PR00509">
    <property type="entry name" value="PGMPMM"/>
</dbReference>
<dbReference type="SUPFAM" id="SSF55957">
    <property type="entry name" value="Phosphoglucomutase, C-terminal domain"/>
    <property type="match status" value="1"/>
</dbReference>
<dbReference type="SUPFAM" id="SSF53738">
    <property type="entry name" value="Phosphoglucomutase, first 3 domains"/>
    <property type="match status" value="3"/>
</dbReference>
<dbReference type="PROSITE" id="PS00710">
    <property type="entry name" value="PGM_PMM"/>
    <property type="match status" value="1"/>
</dbReference>
<organism>
    <name type="scientific">Yersinia pseudotuberculosis serotype I (strain IP32953)</name>
    <dbReference type="NCBI Taxonomy" id="273123"/>
    <lineage>
        <taxon>Bacteria</taxon>
        <taxon>Pseudomonadati</taxon>
        <taxon>Pseudomonadota</taxon>
        <taxon>Gammaproteobacteria</taxon>
        <taxon>Enterobacterales</taxon>
        <taxon>Yersiniaceae</taxon>
        <taxon>Yersinia</taxon>
    </lineage>
</organism>
<reference key="1">
    <citation type="journal article" date="2004" name="Proc. Natl. Acad. Sci. U.S.A.">
        <title>Insights into the evolution of Yersinia pestis through whole-genome comparison with Yersinia pseudotuberculosis.</title>
        <authorList>
            <person name="Chain P.S.G."/>
            <person name="Carniel E."/>
            <person name="Larimer F.W."/>
            <person name="Lamerdin J."/>
            <person name="Stoutland P.O."/>
            <person name="Regala W.M."/>
            <person name="Georgescu A.M."/>
            <person name="Vergez L.M."/>
            <person name="Land M.L."/>
            <person name="Motin V.L."/>
            <person name="Brubaker R.R."/>
            <person name="Fowler J."/>
            <person name="Hinnebusch J."/>
            <person name="Marceau M."/>
            <person name="Medigue C."/>
            <person name="Simonet M."/>
            <person name="Chenal-Francisque V."/>
            <person name="Souza B."/>
            <person name="Dacheux D."/>
            <person name="Elliott J.M."/>
            <person name="Derbise A."/>
            <person name="Hauser L.J."/>
            <person name="Garcia E."/>
        </authorList>
    </citation>
    <scope>NUCLEOTIDE SEQUENCE [LARGE SCALE GENOMIC DNA]</scope>
    <source>
        <strain>IP32953</strain>
    </source>
</reference>
<name>GLMM_YERPS</name>